<protein>
    <recommendedName>
        <fullName>DNA polymerase III subunit alpha</fullName>
        <ecNumber>2.7.7.7</ecNumber>
    </recommendedName>
</protein>
<keyword id="KW-0963">Cytoplasm</keyword>
<keyword id="KW-0235">DNA replication</keyword>
<keyword id="KW-0239">DNA-directed DNA polymerase</keyword>
<keyword id="KW-0548">Nucleotidyltransferase</keyword>
<keyword id="KW-0808">Transferase</keyword>
<reference key="1">
    <citation type="journal article" date="1999" name="J. Mol. Evol.">
        <title>DNA polymerase C of the thermophilic bacterium Thermus aquaticus: classification and phylogenetic analysis of the family C DNA polymerases.</title>
        <authorList>
            <person name="Huang Y.P."/>
            <person name="Ito J."/>
        </authorList>
    </citation>
    <scope>NUCLEOTIDE SEQUENCE [GENOMIC DNA]</scope>
</reference>
<organism>
    <name type="scientific">Pseudomonas fluorescens</name>
    <dbReference type="NCBI Taxonomy" id="294"/>
    <lineage>
        <taxon>Bacteria</taxon>
        <taxon>Pseudomonadati</taxon>
        <taxon>Pseudomonadota</taxon>
        <taxon>Gammaproteobacteria</taxon>
        <taxon>Pseudomonadales</taxon>
        <taxon>Pseudomonadaceae</taxon>
        <taxon>Pseudomonas</taxon>
    </lineage>
</organism>
<name>DPO3A_PSEFL</name>
<sequence length="1173" mass="131217">MPASFVHLRLHTEYSLVDGLVRIKPLVKALTGMGMPAVAVTDQNNMCSLVKFYKNAMGAGIKPICGADLWLSNKDPDGPLSRISLLVMNAQGYRNLTELISRGFIDGQRNGMVIIEREWVAEANEGLIMLSAAKEGEIGMAMIGGNPAEAEALAREWMAVFPDRFYLEIQRTNRPNDEEQLHGAVALADKLGAPLVATNDVRFIKQEDFAAHETRVCIGEGRALDDPRRSKNYSDQQYLKSAEEMAELFSDLPDAIENTVEIAKRCNIDVKLGKHFLPDYPIPDGMTIDEYFRKVSFDGLEERLSVLLPKDTTEDYEAKRQVYVDRLNFELDIIIQMGFPGYFLIVMDFIQWAKNNGVPVGPGRGSGAGSLVAYVQKITDLDPLEYDLLFERFLNPERVSMPDFDVDFCMDGRDRVIDYVAEKYGRNAVSQIITFGSMAAKAVVRDVARAQGKSFGLADRLSKMVPFEVGMTLEKAYEQEEILRDFIKVDEEAAEIWEMARKLEGVVRNVGKHAGGVVIAPTKLTDFSPIYCDEAGDGLVTQFDKDDVEAAGLVKFDFLGLRTLTIIDWALKTINRDRAKVNEPPLDIAFIPLDDKPTYQLLQKAETTAVFQLESRGMKELIKKLKLDCLEDLIALVALFRPGPLQSGMVDDFINRKHGRAELAYPHPDYQYEGLQPVLAPTYGIILYQEQVMQIAQVMAGYTLGGADMLRRAMGKKKPEEMAKQRGGFIEGCASNNIDADLAGNIFDLVEKFAGYGFNKSHSAAYGLVSYQTAWLKAHYPAPFMAAVLSADMHNTDKVVTLIEEVRTMKLRLDAPDVNTSEFKFTVNDEGRIVYGLGAIKGVGEGPVEAITEARQAGPFKDLFDFCARVDLKRINKRTLDGLIRSGALDRLGPYFHDEQKAYQANIDRNRAVLLAAMEEAIKSAEQTARTRDSGHADLFGGLFVEEDADVYAIHRKAKELTLKERLKGEKDTLGLYLTGHPIDEYEGEIRRFARQRIIDLKPARDTQTVAGMIIALRVMKNKKGDKMGFITLDDRSGRIEASLFADAFHSAQSLLQTDAMVVVEGEVSNDDFSGGLRLRVKRVMSMEDARTNLAESLRLKLQTQDLKGDQLRWLGDLLKRHRGACPITMEYTSPDAKTLLQFGETWRIDPADALIQALRDQFGRDNVFLQYR</sequence>
<proteinExistence type="inferred from homology"/>
<accession>Q9XDH6</accession>
<evidence type="ECO:0000250" key="1"/>
<evidence type="ECO:0000305" key="2"/>
<gene>
    <name type="primary">dnaE</name>
</gene>
<dbReference type="EC" id="2.7.7.7"/>
<dbReference type="EMBL" id="AF062919">
    <property type="protein sequence ID" value="AAD44402.1"/>
    <property type="molecule type" value="Genomic_DNA"/>
</dbReference>
<dbReference type="SMR" id="Q9XDH6"/>
<dbReference type="eggNOG" id="COG0587">
    <property type="taxonomic scope" value="Bacteria"/>
</dbReference>
<dbReference type="GO" id="GO:0005737">
    <property type="term" value="C:cytoplasm"/>
    <property type="evidence" value="ECO:0007669"/>
    <property type="project" value="UniProtKB-SubCell"/>
</dbReference>
<dbReference type="GO" id="GO:0008408">
    <property type="term" value="F:3'-5' exonuclease activity"/>
    <property type="evidence" value="ECO:0007669"/>
    <property type="project" value="InterPro"/>
</dbReference>
<dbReference type="GO" id="GO:0003887">
    <property type="term" value="F:DNA-directed DNA polymerase activity"/>
    <property type="evidence" value="ECO:0007669"/>
    <property type="project" value="UniProtKB-KW"/>
</dbReference>
<dbReference type="GO" id="GO:0003676">
    <property type="term" value="F:nucleic acid binding"/>
    <property type="evidence" value="ECO:0007669"/>
    <property type="project" value="InterPro"/>
</dbReference>
<dbReference type="GO" id="GO:0006260">
    <property type="term" value="P:DNA replication"/>
    <property type="evidence" value="ECO:0007669"/>
    <property type="project" value="UniProtKB-KW"/>
</dbReference>
<dbReference type="CDD" id="cd04485">
    <property type="entry name" value="DnaE_OBF"/>
    <property type="match status" value="1"/>
</dbReference>
<dbReference type="CDD" id="cd07433">
    <property type="entry name" value="PHP_PolIIIA_DnaE1"/>
    <property type="match status" value="1"/>
</dbReference>
<dbReference type="FunFam" id="1.10.10.1600:FF:000001">
    <property type="entry name" value="DNA polymerase III subunit alpha"/>
    <property type="match status" value="1"/>
</dbReference>
<dbReference type="FunFam" id="1.10.150.870:FF:000001">
    <property type="entry name" value="DNA polymerase III subunit alpha"/>
    <property type="match status" value="1"/>
</dbReference>
<dbReference type="FunFam" id="2.40.50.140:FF:000106">
    <property type="entry name" value="DNA polymerase III subunit alpha"/>
    <property type="match status" value="1"/>
</dbReference>
<dbReference type="FunFam" id="3.20.20.140:FF:000028">
    <property type="entry name" value="DNA polymerase III subunit alpha"/>
    <property type="match status" value="1"/>
</dbReference>
<dbReference type="Gene3D" id="1.10.150.870">
    <property type="match status" value="1"/>
</dbReference>
<dbReference type="Gene3D" id="1.10.10.1600">
    <property type="entry name" value="Bacterial DNA polymerase III alpha subunit, thumb domain"/>
    <property type="match status" value="1"/>
</dbReference>
<dbReference type="Gene3D" id="3.20.20.140">
    <property type="entry name" value="Metal-dependent hydrolases"/>
    <property type="match status" value="1"/>
</dbReference>
<dbReference type="Gene3D" id="2.40.50.140">
    <property type="entry name" value="Nucleic acid-binding proteins"/>
    <property type="match status" value="1"/>
</dbReference>
<dbReference type="InterPro" id="IPR011708">
    <property type="entry name" value="DNA_pol3_alpha_NTPase_dom"/>
</dbReference>
<dbReference type="InterPro" id="IPR041931">
    <property type="entry name" value="DNA_pol3_alpha_thumb_dom"/>
</dbReference>
<dbReference type="InterPro" id="IPR040982">
    <property type="entry name" value="DNA_pol3_finger"/>
</dbReference>
<dbReference type="InterPro" id="IPR048472">
    <property type="entry name" value="DNA_pol_IIIA_C"/>
</dbReference>
<dbReference type="InterPro" id="IPR004805">
    <property type="entry name" value="DnaE2/DnaE/PolC"/>
</dbReference>
<dbReference type="InterPro" id="IPR029460">
    <property type="entry name" value="DNAPol_HHH"/>
</dbReference>
<dbReference type="InterPro" id="IPR012340">
    <property type="entry name" value="NA-bd_OB-fold"/>
</dbReference>
<dbReference type="InterPro" id="IPR004365">
    <property type="entry name" value="NA-bd_OB_tRNA"/>
</dbReference>
<dbReference type="InterPro" id="IPR004013">
    <property type="entry name" value="PHP_dom"/>
</dbReference>
<dbReference type="InterPro" id="IPR003141">
    <property type="entry name" value="Pol/His_phosphatase_N"/>
</dbReference>
<dbReference type="InterPro" id="IPR016195">
    <property type="entry name" value="Pol/histidinol_Pase-like"/>
</dbReference>
<dbReference type="InterPro" id="IPR049821">
    <property type="entry name" value="PolIIIA_DnaE1_PHP"/>
</dbReference>
<dbReference type="NCBIfam" id="TIGR00594">
    <property type="entry name" value="polc"/>
    <property type="match status" value="1"/>
</dbReference>
<dbReference type="NCBIfam" id="NF004226">
    <property type="entry name" value="PRK05673.1"/>
    <property type="match status" value="1"/>
</dbReference>
<dbReference type="PANTHER" id="PTHR32294">
    <property type="entry name" value="DNA POLYMERASE III SUBUNIT ALPHA"/>
    <property type="match status" value="1"/>
</dbReference>
<dbReference type="PANTHER" id="PTHR32294:SF0">
    <property type="entry name" value="DNA POLYMERASE III SUBUNIT ALPHA"/>
    <property type="match status" value="1"/>
</dbReference>
<dbReference type="Pfam" id="PF07733">
    <property type="entry name" value="DNA_pol3_alpha"/>
    <property type="match status" value="1"/>
</dbReference>
<dbReference type="Pfam" id="PF17657">
    <property type="entry name" value="DNA_pol3_finger"/>
    <property type="match status" value="1"/>
</dbReference>
<dbReference type="Pfam" id="PF20914">
    <property type="entry name" value="DNA_pol_IIIA_C"/>
    <property type="match status" value="1"/>
</dbReference>
<dbReference type="Pfam" id="PF14579">
    <property type="entry name" value="HHH_6"/>
    <property type="match status" value="1"/>
</dbReference>
<dbReference type="Pfam" id="PF02811">
    <property type="entry name" value="PHP"/>
    <property type="match status" value="1"/>
</dbReference>
<dbReference type="Pfam" id="PF01336">
    <property type="entry name" value="tRNA_anti-codon"/>
    <property type="match status" value="1"/>
</dbReference>
<dbReference type="SMART" id="SM00481">
    <property type="entry name" value="POLIIIAc"/>
    <property type="match status" value="1"/>
</dbReference>
<dbReference type="SUPFAM" id="SSF160975">
    <property type="entry name" value="AF1531-like"/>
    <property type="match status" value="1"/>
</dbReference>
<dbReference type="SUPFAM" id="SSF89550">
    <property type="entry name" value="PHP domain-like"/>
    <property type="match status" value="1"/>
</dbReference>
<comment type="function">
    <text evidence="1">DNA polymerase III is a complex, multichain enzyme responsible for most of the replicative synthesis in bacteria. This DNA polymerase also exhibits 3' to 5' exonuclease activity. The alpha chain is the DNA polymerase (By similarity).</text>
</comment>
<comment type="catalytic activity">
    <reaction>
        <text>DNA(n) + a 2'-deoxyribonucleoside 5'-triphosphate = DNA(n+1) + diphosphate</text>
        <dbReference type="Rhea" id="RHEA:22508"/>
        <dbReference type="Rhea" id="RHEA-COMP:17339"/>
        <dbReference type="Rhea" id="RHEA-COMP:17340"/>
        <dbReference type="ChEBI" id="CHEBI:33019"/>
        <dbReference type="ChEBI" id="CHEBI:61560"/>
        <dbReference type="ChEBI" id="CHEBI:173112"/>
        <dbReference type="EC" id="2.7.7.7"/>
    </reaction>
</comment>
<comment type="subunit">
    <text evidence="1">DNA polymerase III contains a core (composed of alpha, epsilon and theta chains) that associates with a tau subunit. This core dimerizes to form the PolIII' complex. PolIII' associates with the gamma complex (composed of gamma, delta, delta', psi and chi chains) and with the beta chain to form the complete DNA polymerase III complex (By similarity).</text>
</comment>
<comment type="subcellular location">
    <subcellularLocation>
        <location evidence="1">Cytoplasm</location>
    </subcellularLocation>
</comment>
<comment type="similarity">
    <text evidence="2">Belongs to the DNA polymerase type-C family. DnaE subfamily.</text>
</comment>
<feature type="chain" id="PRO_0000103335" description="DNA polymerase III subunit alpha">
    <location>
        <begin position="1"/>
        <end position="1173"/>
    </location>
</feature>